<name>AROA_CHLTA</name>
<feature type="chain" id="PRO_1000012426" description="3-phosphoshikimate 1-carboxyvinyltransferase">
    <location>
        <begin position="1"/>
        <end position="440"/>
    </location>
</feature>
<feature type="active site" description="Proton acceptor" evidence="1">
    <location>
        <position position="310"/>
    </location>
</feature>
<feature type="binding site" evidence="1">
    <location>
        <position position="25"/>
    </location>
    <ligand>
        <name>3-phosphoshikimate</name>
        <dbReference type="ChEBI" id="CHEBI:145989"/>
    </ligand>
</feature>
<feature type="binding site" evidence="1">
    <location>
        <position position="25"/>
    </location>
    <ligand>
        <name>phosphoenolpyruvate</name>
        <dbReference type="ChEBI" id="CHEBI:58702"/>
    </ligand>
</feature>
<feature type="binding site" evidence="1">
    <location>
        <position position="26"/>
    </location>
    <ligand>
        <name>3-phosphoshikimate</name>
        <dbReference type="ChEBI" id="CHEBI:145989"/>
    </ligand>
</feature>
<feature type="binding site" evidence="1">
    <location>
        <position position="30"/>
    </location>
    <ligand>
        <name>3-phosphoshikimate</name>
        <dbReference type="ChEBI" id="CHEBI:145989"/>
    </ligand>
</feature>
<feature type="binding site" evidence="1">
    <location>
        <position position="96"/>
    </location>
    <ligand>
        <name>phosphoenolpyruvate</name>
        <dbReference type="ChEBI" id="CHEBI:58702"/>
    </ligand>
</feature>
<feature type="binding site" evidence="1">
    <location>
        <position position="124"/>
    </location>
    <ligand>
        <name>phosphoenolpyruvate</name>
        <dbReference type="ChEBI" id="CHEBI:58702"/>
    </ligand>
</feature>
<feature type="binding site" evidence="1">
    <location>
        <position position="168"/>
    </location>
    <ligand>
        <name>3-phosphoshikimate</name>
        <dbReference type="ChEBI" id="CHEBI:145989"/>
    </ligand>
</feature>
<feature type="binding site" evidence="1">
    <location>
        <position position="169"/>
    </location>
    <ligand>
        <name>3-phosphoshikimate</name>
        <dbReference type="ChEBI" id="CHEBI:145989"/>
    </ligand>
</feature>
<feature type="binding site" evidence="1">
    <location>
        <position position="169"/>
    </location>
    <ligand>
        <name>phosphoenolpyruvate</name>
        <dbReference type="ChEBI" id="CHEBI:58702"/>
    </ligand>
</feature>
<feature type="binding site" evidence="1">
    <location>
        <position position="310"/>
    </location>
    <ligand>
        <name>3-phosphoshikimate</name>
        <dbReference type="ChEBI" id="CHEBI:145989"/>
    </ligand>
</feature>
<feature type="binding site" evidence="1">
    <location>
        <position position="337"/>
    </location>
    <ligand>
        <name>3-phosphoshikimate</name>
        <dbReference type="ChEBI" id="CHEBI:145989"/>
    </ligand>
</feature>
<feature type="binding site" evidence="1">
    <location>
        <position position="341"/>
    </location>
    <ligand>
        <name>phosphoenolpyruvate</name>
        <dbReference type="ChEBI" id="CHEBI:58702"/>
    </ligand>
</feature>
<feature type="binding site" evidence="1">
    <location>
        <position position="382"/>
    </location>
    <ligand>
        <name>phosphoenolpyruvate</name>
        <dbReference type="ChEBI" id="CHEBI:58702"/>
    </ligand>
</feature>
<feature type="binding site" evidence="1">
    <location>
        <position position="409"/>
    </location>
    <ligand>
        <name>phosphoenolpyruvate</name>
        <dbReference type="ChEBI" id="CHEBI:58702"/>
    </ligand>
</feature>
<comment type="function">
    <text evidence="1">Catalyzes the transfer of the enolpyruvyl moiety of phosphoenolpyruvate (PEP) to the 5-hydroxyl of shikimate-3-phosphate (S3P) to produce enolpyruvyl shikimate-3-phosphate and inorganic phosphate.</text>
</comment>
<comment type="catalytic activity">
    <reaction evidence="1">
        <text>3-phosphoshikimate + phosphoenolpyruvate = 5-O-(1-carboxyvinyl)-3-phosphoshikimate + phosphate</text>
        <dbReference type="Rhea" id="RHEA:21256"/>
        <dbReference type="ChEBI" id="CHEBI:43474"/>
        <dbReference type="ChEBI" id="CHEBI:57701"/>
        <dbReference type="ChEBI" id="CHEBI:58702"/>
        <dbReference type="ChEBI" id="CHEBI:145989"/>
        <dbReference type="EC" id="2.5.1.19"/>
    </reaction>
    <physiologicalReaction direction="left-to-right" evidence="1">
        <dbReference type="Rhea" id="RHEA:21257"/>
    </physiologicalReaction>
</comment>
<comment type="pathway">
    <text evidence="1">Metabolic intermediate biosynthesis; chorismate biosynthesis; chorismate from D-erythrose 4-phosphate and phosphoenolpyruvate: step 6/7.</text>
</comment>
<comment type="subunit">
    <text evidence="1">Monomer.</text>
</comment>
<comment type="subcellular location">
    <subcellularLocation>
        <location evidence="1">Cytoplasm</location>
    </subcellularLocation>
</comment>
<comment type="similarity">
    <text evidence="1">Belongs to the EPSP synthase family.</text>
</comment>
<reference key="1">
    <citation type="journal article" date="2005" name="Infect. Immun.">
        <title>Comparative genomic analysis of Chlamydia trachomatis oculotropic and genitotropic strains.</title>
        <authorList>
            <person name="Carlson J.H."/>
            <person name="Porcella S.F."/>
            <person name="McClarty G."/>
            <person name="Caldwell H.D."/>
        </authorList>
    </citation>
    <scope>NUCLEOTIDE SEQUENCE [LARGE SCALE GENOMIC DNA]</scope>
    <source>
        <strain>ATCC VR-571B / DSM 19440 / HAR-13</strain>
    </source>
</reference>
<protein>
    <recommendedName>
        <fullName evidence="1">3-phosphoshikimate 1-carboxyvinyltransferase</fullName>
        <ecNumber evidence="1">2.5.1.19</ecNumber>
    </recommendedName>
    <alternativeName>
        <fullName evidence="1">5-enolpyruvylshikimate-3-phosphate synthase</fullName>
        <shortName evidence="1">EPSP synthase</shortName>
        <shortName evidence="1">EPSPS</shortName>
    </alternativeName>
</protein>
<gene>
    <name evidence="1" type="primary">aroA</name>
    <name type="ordered locus">CTA_0398</name>
</gene>
<accession>Q3KLZ0</accession>
<proteinExistence type="inferred from homology"/>
<organism>
    <name type="scientific">Chlamydia trachomatis serovar A (strain ATCC VR-571B / DSM 19440 / HAR-13)</name>
    <dbReference type="NCBI Taxonomy" id="315277"/>
    <lineage>
        <taxon>Bacteria</taxon>
        <taxon>Pseudomonadati</taxon>
        <taxon>Chlamydiota</taxon>
        <taxon>Chlamydiia</taxon>
        <taxon>Chlamydiales</taxon>
        <taxon>Chlamydiaceae</taxon>
        <taxon>Chlamydia/Chlamydophila group</taxon>
        <taxon>Chlamydia</taxon>
    </lineage>
</organism>
<dbReference type="EC" id="2.5.1.19" evidence="1"/>
<dbReference type="EMBL" id="CP000051">
    <property type="protein sequence ID" value="AAX50632.1"/>
    <property type="molecule type" value="Genomic_DNA"/>
</dbReference>
<dbReference type="RefSeq" id="WP_011324703.1">
    <property type="nucleotide sequence ID" value="NC_007429.1"/>
</dbReference>
<dbReference type="SMR" id="Q3KLZ0"/>
<dbReference type="KEGG" id="cta:CTA_0398"/>
<dbReference type="HOGENOM" id="CLU_024321_0_0_0"/>
<dbReference type="UniPathway" id="UPA00053">
    <property type="reaction ID" value="UER00089"/>
</dbReference>
<dbReference type="Proteomes" id="UP000002532">
    <property type="component" value="Chromosome"/>
</dbReference>
<dbReference type="GO" id="GO:0005737">
    <property type="term" value="C:cytoplasm"/>
    <property type="evidence" value="ECO:0007669"/>
    <property type="project" value="UniProtKB-SubCell"/>
</dbReference>
<dbReference type="GO" id="GO:0003866">
    <property type="term" value="F:3-phosphoshikimate 1-carboxyvinyltransferase activity"/>
    <property type="evidence" value="ECO:0007669"/>
    <property type="project" value="UniProtKB-UniRule"/>
</dbReference>
<dbReference type="GO" id="GO:0008652">
    <property type="term" value="P:amino acid biosynthetic process"/>
    <property type="evidence" value="ECO:0007669"/>
    <property type="project" value="UniProtKB-KW"/>
</dbReference>
<dbReference type="GO" id="GO:0009073">
    <property type="term" value="P:aromatic amino acid family biosynthetic process"/>
    <property type="evidence" value="ECO:0007669"/>
    <property type="project" value="UniProtKB-KW"/>
</dbReference>
<dbReference type="GO" id="GO:0009423">
    <property type="term" value="P:chorismate biosynthetic process"/>
    <property type="evidence" value="ECO:0007669"/>
    <property type="project" value="UniProtKB-UniRule"/>
</dbReference>
<dbReference type="CDD" id="cd01556">
    <property type="entry name" value="EPSP_synthase"/>
    <property type="match status" value="1"/>
</dbReference>
<dbReference type="Gene3D" id="3.65.10.10">
    <property type="entry name" value="Enolpyruvate transferase domain"/>
    <property type="match status" value="2"/>
</dbReference>
<dbReference type="HAMAP" id="MF_00210">
    <property type="entry name" value="EPSP_synth"/>
    <property type="match status" value="1"/>
</dbReference>
<dbReference type="InterPro" id="IPR001986">
    <property type="entry name" value="Enolpyruvate_Tfrase_dom"/>
</dbReference>
<dbReference type="InterPro" id="IPR036968">
    <property type="entry name" value="Enolpyruvate_Tfrase_sf"/>
</dbReference>
<dbReference type="InterPro" id="IPR006264">
    <property type="entry name" value="EPSP_synthase"/>
</dbReference>
<dbReference type="InterPro" id="IPR023193">
    <property type="entry name" value="EPSP_synthase_CS"/>
</dbReference>
<dbReference type="InterPro" id="IPR013792">
    <property type="entry name" value="RNA3'P_cycl/enolpyr_Trfase_a/b"/>
</dbReference>
<dbReference type="NCBIfam" id="TIGR01356">
    <property type="entry name" value="aroA"/>
    <property type="match status" value="1"/>
</dbReference>
<dbReference type="PANTHER" id="PTHR21090">
    <property type="entry name" value="AROM/DEHYDROQUINATE SYNTHASE"/>
    <property type="match status" value="1"/>
</dbReference>
<dbReference type="PANTHER" id="PTHR21090:SF5">
    <property type="entry name" value="PENTAFUNCTIONAL AROM POLYPEPTIDE"/>
    <property type="match status" value="1"/>
</dbReference>
<dbReference type="Pfam" id="PF00275">
    <property type="entry name" value="EPSP_synthase"/>
    <property type="match status" value="1"/>
</dbReference>
<dbReference type="PIRSF" id="PIRSF000505">
    <property type="entry name" value="EPSPS"/>
    <property type="match status" value="1"/>
</dbReference>
<dbReference type="SUPFAM" id="SSF55205">
    <property type="entry name" value="EPT/RTPC-like"/>
    <property type="match status" value="1"/>
</dbReference>
<dbReference type="PROSITE" id="PS00104">
    <property type="entry name" value="EPSP_SYNTHASE_1"/>
    <property type="match status" value="1"/>
</dbReference>
<dbReference type="PROSITE" id="PS00885">
    <property type="entry name" value="EPSP_SYNTHASE_2"/>
    <property type="match status" value="1"/>
</dbReference>
<evidence type="ECO:0000255" key="1">
    <source>
        <dbReference type="HAMAP-Rule" id="MF_00210"/>
    </source>
</evidence>
<sequence>MVSSNQDLLISPSIPYGEIAVPPSKSHSLRAILFASLSKGTSIIENCLFSPDSQAMLTACEKMGAHVRRIGDSLHIQGNPDPHHCHPRYFHMGNSGIALRFLTALSTLSPTPTLITGSHTLKRRPIAPLLSSLKQLGAHIRQKTSSSIPFTIHGPLSPGHVTISGQDSQYASALAITAALAPYPLSFSIENLKERPWFDLTLDWLHSLNISFLRDQDSLTFPGGQSLESFSYSVPGDYSSAAFLASFGLLSSSSKPTILRNLSSQDSQGDKLLFSLLKQLGAHILIGKHHIEMHPSSFSGGEIDMDPFIDALPILAVLCCFAKNPSRLYNALGAKDKESNRIEAIAHELQKMGGSVHPTRDGLYIKPSRLHGAVVDSHNDHRIAMALAVAGVHASSGQTLLCNTQCINKSFPYFVIAAQTLHANVRHYQADFPLRSSFCR</sequence>
<keyword id="KW-0028">Amino-acid biosynthesis</keyword>
<keyword id="KW-0057">Aromatic amino acid biosynthesis</keyword>
<keyword id="KW-0963">Cytoplasm</keyword>
<keyword id="KW-0808">Transferase</keyword>